<reference key="1">
    <citation type="submission" date="2008-10" db="EMBL/GenBank/DDBJ databases">
        <title>The complete genome sequence of Helicobacter pylori strain P12.</title>
        <authorList>
            <person name="Fischer W."/>
            <person name="Windhager L."/>
            <person name="Karnholz A."/>
            <person name="Zeiller M."/>
            <person name="Zimmer R."/>
            <person name="Haas R."/>
        </authorList>
    </citation>
    <scope>NUCLEOTIDE SEQUENCE [LARGE SCALE GENOMIC DNA]</scope>
    <source>
        <strain>P12</strain>
    </source>
</reference>
<dbReference type="EMBL" id="CP001217">
    <property type="protein sequence ID" value="ACJ08622.1"/>
    <property type="molecule type" value="Genomic_DNA"/>
</dbReference>
<dbReference type="SMR" id="B6JNZ4"/>
<dbReference type="KEGG" id="hpp:HPP12_1474"/>
<dbReference type="HOGENOM" id="CLU_075939_2_2_7"/>
<dbReference type="Proteomes" id="UP000008198">
    <property type="component" value="Chromosome"/>
</dbReference>
<dbReference type="GO" id="GO:0022625">
    <property type="term" value="C:cytosolic large ribosomal subunit"/>
    <property type="evidence" value="ECO:0007669"/>
    <property type="project" value="TreeGrafter"/>
</dbReference>
<dbReference type="GO" id="GO:0008097">
    <property type="term" value="F:5S rRNA binding"/>
    <property type="evidence" value="ECO:0007669"/>
    <property type="project" value="InterPro"/>
</dbReference>
<dbReference type="GO" id="GO:0003735">
    <property type="term" value="F:structural constituent of ribosome"/>
    <property type="evidence" value="ECO:0007669"/>
    <property type="project" value="InterPro"/>
</dbReference>
<dbReference type="GO" id="GO:0006412">
    <property type="term" value="P:translation"/>
    <property type="evidence" value="ECO:0007669"/>
    <property type="project" value="UniProtKB-UniRule"/>
</dbReference>
<dbReference type="CDD" id="cd00495">
    <property type="entry name" value="Ribosomal_L25_TL5_CTC"/>
    <property type="match status" value="1"/>
</dbReference>
<dbReference type="Gene3D" id="2.170.120.20">
    <property type="entry name" value="Ribosomal protein L25, beta domain"/>
    <property type="match status" value="1"/>
</dbReference>
<dbReference type="Gene3D" id="2.40.240.10">
    <property type="entry name" value="Ribosomal Protein L25, Chain P"/>
    <property type="match status" value="1"/>
</dbReference>
<dbReference type="HAMAP" id="MF_01334">
    <property type="entry name" value="Ribosomal_bL25_CTC"/>
    <property type="match status" value="1"/>
</dbReference>
<dbReference type="InterPro" id="IPR020056">
    <property type="entry name" value="Rbsml_bL25/Gln-tRNA_synth_N"/>
</dbReference>
<dbReference type="InterPro" id="IPR011035">
    <property type="entry name" value="Ribosomal_bL25/Gln-tRNA_synth"/>
</dbReference>
<dbReference type="InterPro" id="IPR020057">
    <property type="entry name" value="Ribosomal_bL25_b-dom"/>
</dbReference>
<dbReference type="InterPro" id="IPR037121">
    <property type="entry name" value="Ribosomal_bL25_C"/>
</dbReference>
<dbReference type="InterPro" id="IPR001021">
    <property type="entry name" value="Ribosomal_bL25_long"/>
</dbReference>
<dbReference type="InterPro" id="IPR029751">
    <property type="entry name" value="Ribosomal_L25_dom"/>
</dbReference>
<dbReference type="InterPro" id="IPR020930">
    <property type="entry name" value="Ribosomal_uL5_bac-type"/>
</dbReference>
<dbReference type="NCBIfam" id="TIGR00731">
    <property type="entry name" value="bL25_bact_ctc"/>
    <property type="match status" value="1"/>
</dbReference>
<dbReference type="NCBIfam" id="NF004129">
    <property type="entry name" value="PRK05618.1-4"/>
    <property type="match status" value="1"/>
</dbReference>
<dbReference type="PANTHER" id="PTHR33284">
    <property type="entry name" value="RIBOSOMAL PROTEIN L25/GLN-TRNA SYNTHETASE, ANTI-CODON-BINDING DOMAIN-CONTAINING PROTEIN"/>
    <property type="match status" value="1"/>
</dbReference>
<dbReference type="PANTHER" id="PTHR33284:SF1">
    <property type="entry name" value="RIBOSOMAL PROTEIN L25_GLN-TRNA SYNTHETASE, ANTI-CODON-BINDING DOMAIN-CONTAINING PROTEIN"/>
    <property type="match status" value="1"/>
</dbReference>
<dbReference type="Pfam" id="PF01386">
    <property type="entry name" value="Ribosomal_L25p"/>
    <property type="match status" value="1"/>
</dbReference>
<dbReference type="Pfam" id="PF14693">
    <property type="entry name" value="Ribosomal_TL5_C"/>
    <property type="match status" value="1"/>
</dbReference>
<dbReference type="SUPFAM" id="SSF50715">
    <property type="entry name" value="Ribosomal protein L25-like"/>
    <property type="match status" value="1"/>
</dbReference>
<keyword id="KW-0687">Ribonucleoprotein</keyword>
<keyword id="KW-0689">Ribosomal protein</keyword>
<keyword id="KW-0694">RNA-binding</keyword>
<keyword id="KW-0699">rRNA-binding</keyword>
<gene>
    <name evidence="1" type="primary">rplY</name>
    <name evidence="1" type="synonym">ctc</name>
    <name type="ordered locus">HPP12_1474</name>
</gene>
<accession>B6JNZ4</accession>
<organism>
    <name type="scientific">Helicobacter pylori (strain P12)</name>
    <dbReference type="NCBI Taxonomy" id="570508"/>
    <lineage>
        <taxon>Bacteria</taxon>
        <taxon>Pseudomonadati</taxon>
        <taxon>Campylobacterota</taxon>
        <taxon>Epsilonproteobacteria</taxon>
        <taxon>Campylobacterales</taxon>
        <taxon>Helicobacteraceae</taxon>
        <taxon>Helicobacter</taxon>
    </lineage>
</organism>
<sequence>MLEGVIRESITKANAKALKKDGYLIANVYGKGIENVNCAFKLNPFIKYLKEKKHLIFPVKLGDKTFEVVVQEYQKNPVTNELIHVDLLAVTKGVKSKFKVPVKHQGTPVGLKNKGILMLSKKRISVECAPEHLPDHYLVDVAPLDVNESVLVRDLEKHENVKILDHDSIAVIGVIKAK</sequence>
<proteinExistence type="inferred from homology"/>
<protein>
    <recommendedName>
        <fullName evidence="1">Large ribosomal subunit protein bL25</fullName>
    </recommendedName>
    <alternativeName>
        <fullName evidence="2">50S ribosomal protein L25</fullName>
    </alternativeName>
    <alternativeName>
        <fullName evidence="1">General stress protein CTC</fullName>
    </alternativeName>
</protein>
<name>RL25_HELP2</name>
<feature type="chain" id="PRO_1000142525" description="Large ribosomal subunit protein bL25">
    <location>
        <begin position="1"/>
        <end position="178"/>
    </location>
</feature>
<comment type="function">
    <text evidence="1">This is one of the proteins that binds to the 5S RNA in the ribosome where it forms part of the central protuberance.</text>
</comment>
<comment type="subunit">
    <text evidence="1">Part of the 50S ribosomal subunit; part of the 5S rRNA/L5/L18/L25 subcomplex. Contacts the 5S rRNA. Binds to the 5S rRNA independently of L5 and L18.</text>
</comment>
<comment type="similarity">
    <text evidence="1">Belongs to the bacterial ribosomal protein bL25 family. CTC subfamily.</text>
</comment>
<evidence type="ECO:0000255" key="1">
    <source>
        <dbReference type="HAMAP-Rule" id="MF_01334"/>
    </source>
</evidence>
<evidence type="ECO:0000305" key="2"/>